<keyword id="KW-0063">Aspartyl esterase</keyword>
<keyword id="KW-0134">Cell wall</keyword>
<keyword id="KW-0961">Cell wall biogenesis/degradation</keyword>
<keyword id="KW-1015">Disulfide bond</keyword>
<keyword id="KW-0325">Glycoprotein</keyword>
<keyword id="KW-0378">Hydrolase</keyword>
<keyword id="KW-0964">Secreted</keyword>
<keyword id="KW-0732">Signal</keyword>
<dbReference type="EC" id="3.1.1.11"/>
<dbReference type="EMBL" id="X95991">
    <property type="protein sequence ID" value="CAA65237.1"/>
    <property type="molecule type" value="mRNA"/>
</dbReference>
<dbReference type="SMR" id="Q43062"/>
<dbReference type="eggNOG" id="ENOG502QRGV">
    <property type="taxonomic scope" value="Eukaryota"/>
</dbReference>
<dbReference type="UniPathway" id="UPA00545">
    <property type="reaction ID" value="UER00823"/>
</dbReference>
<dbReference type="GO" id="GO:0005576">
    <property type="term" value="C:extracellular region"/>
    <property type="evidence" value="ECO:0007669"/>
    <property type="project" value="UniProtKB-KW"/>
</dbReference>
<dbReference type="GO" id="GO:0004857">
    <property type="term" value="F:enzyme inhibitor activity"/>
    <property type="evidence" value="ECO:0007669"/>
    <property type="project" value="InterPro"/>
</dbReference>
<dbReference type="GO" id="GO:0030599">
    <property type="term" value="F:pectinesterase activity"/>
    <property type="evidence" value="ECO:0007669"/>
    <property type="project" value="UniProtKB-EC"/>
</dbReference>
<dbReference type="GO" id="GO:0042545">
    <property type="term" value="P:cell wall modification"/>
    <property type="evidence" value="ECO:0007669"/>
    <property type="project" value="InterPro"/>
</dbReference>
<dbReference type="GO" id="GO:0045490">
    <property type="term" value="P:pectin catabolic process"/>
    <property type="evidence" value="ECO:0007669"/>
    <property type="project" value="UniProtKB-UniPathway"/>
</dbReference>
<dbReference type="CDD" id="cd15799">
    <property type="entry name" value="PMEI-like_4"/>
    <property type="match status" value="1"/>
</dbReference>
<dbReference type="FunFam" id="2.160.20.10:FF:000001">
    <property type="entry name" value="Pectinesterase"/>
    <property type="match status" value="1"/>
</dbReference>
<dbReference type="Gene3D" id="1.20.140.40">
    <property type="entry name" value="Invertase/pectin methylesterase inhibitor family protein"/>
    <property type="match status" value="1"/>
</dbReference>
<dbReference type="Gene3D" id="2.160.20.10">
    <property type="entry name" value="Single-stranded right-handed beta-helix, Pectin lyase-like"/>
    <property type="match status" value="1"/>
</dbReference>
<dbReference type="InterPro" id="IPR035513">
    <property type="entry name" value="Invertase/methylesterase_inhib"/>
</dbReference>
<dbReference type="InterPro" id="IPR012334">
    <property type="entry name" value="Pectin_lyas_fold"/>
</dbReference>
<dbReference type="InterPro" id="IPR011050">
    <property type="entry name" value="Pectin_lyase_fold/virulence"/>
</dbReference>
<dbReference type="InterPro" id="IPR033131">
    <property type="entry name" value="Pectinesterase_Asp_AS"/>
</dbReference>
<dbReference type="InterPro" id="IPR000070">
    <property type="entry name" value="Pectinesterase_cat"/>
</dbReference>
<dbReference type="InterPro" id="IPR006501">
    <property type="entry name" value="Pectinesterase_inhib_dom"/>
</dbReference>
<dbReference type="InterPro" id="IPR018040">
    <property type="entry name" value="Pectinesterase_Tyr_AS"/>
</dbReference>
<dbReference type="PANTHER" id="PTHR31707">
    <property type="entry name" value="PECTINESTERASE"/>
    <property type="match status" value="1"/>
</dbReference>
<dbReference type="Pfam" id="PF01095">
    <property type="entry name" value="Pectinesterase"/>
    <property type="match status" value="1"/>
</dbReference>
<dbReference type="Pfam" id="PF04043">
    <property type="entry name" value="PMEI"/>
    <property type="match status" value="1"/>
</dbReference>
<dbReference type="SMART" id="SM00856">
    <property type="entry name" value="PMEI"/>
    <property type="match status" value="1"/>
</dbReference>
<dbReference type="SUPFAM" id="SSF51126">
    <property type="entry name" value="Pectin lyase-like"/>
    <property type="match status" value="1"/>
</dbReference>
<dbReference type="SUPFAM" id="SSF101148">
    <property type="entry name" value="Plant invertase/pectin methylesterase inhibitor"/>
    <property type="match status" value="1"/>
</dbReference>
<dbReference type="PROSITE" id="PS00800">
    <property type="entry name" value="PECTINESTERASE_1"/>
    <property type="match status" value="1"/>
</dbReference>
<dbReference type="PROSITE" id="PS00503">
    <property type="entry name" value="PECTINESTERASE_2"/>
    <property type="match status" value="1"/>
</dbReference>
<reference key="1">
    <citation type="online journal article" date="1996" name="Plant Gene Register">
        <title>Multiple pectin esterase genes are expressed in ripening peach fruit: nucleotide sequence of a cDNA encoding peach pectin esterase.</title>
        <authorList>
            <person name="Glover H."/>
            <person name="Brady C.J."/>
            <person name="Lee E."/>
            <person name="Speirs J."/>
        </authorList>
        <locator>PGR96-094</locator>
    </citation>
    <scope>NUCLEOTIDE SEQUENCE [MRNA]</scope>
    <source>
        <strain>cv. Coronet</strain>
        <tissue>Fruit</tissue>
    </source>
</reference>
<comment type="function">
    <text>May have roles in the deposition of pectin in developing tissues and in the wall loosening and cell separation that occurs in cell expansion, fruit ripening and abscission.</text>
</comment>
<comment type="catalytic activity">
    <reaction>
        <text>[(1-&gt;4)-alpha-D-galacturonosyl methyl ester](n) + n H2O = [(1-&gt;4)-alpha-D-galacturonosyl](n) + n methanol + n H(+)</text>
        <dbReference type="Rhea" id="RHEA:22380"/>
        <dbReference type="Rhea" id="RHEA-COMP:14570"/>
        <dbReference type="Rhea" id="RHEA-COMP:14573"/>
        <dbReference type="ChEBI" id="CHEBI:15377"/>
        <dbReference type="ChEBI" id="CHEBI:15378"/>
        <dbReference type="ChEBI" id="CHEBI:17790"/>
        <dbReference type="ChEBI" id="CHEBI:140522"/>
        <dbReference type="ChEBI" id="CHEBI:140523"/>
        <dbReference type="EC" id="3.1.1.11"/>
    </reaction>
</comment>
<comment type="pathway">
    <text>Glycan metabolism; pectin degradation; 2-dehydro-3-deoxy-D-gluconate from pectin: step 1/5.</text>
</comment>
<comment type="subcellular location">
    <subcellularLocation>
        <location evidence="4">Secreted</location>
        <location evidence="4">Cell wall</location>
    </subcellularLocation>
</comment>
<comment type="developmental stage">
    <text>Present throughout fruit development.</text>
</comment>
<comment type="miscellaneous">
    <text>The PMEI region may act as an autoinhibitory domain and prevent untimely PME activity during transport.</text>
</comment>
<comment type="similarity">
    <text evidence="4">In the N-terminal section; belongs to the PMEI family.</text>
</comment>
<comment type="similarity">
    <text evidence="4">In the C-terminal section; belongs to the pectinesterase family.</text>
</comment>
<comment type="caution">
    <text evidence="4">It is uncertain whether Met-1 or Met-6 is the initiator.</text>
</comment>
<evidence type="ECO:0000250" key="1"/>
<evidence type="ECO:0000255" key="2"/>
<evidence type="ECO:0000255" key="3">
    <source>
        <dbReference type="PROSITE-ProRule" id="PRU10040"/>
    </source>
</evidence>
<evidence type="ECO:0000305" key="4"/>
<organism>
    <name type="scientific">Prunus persica</name>
    <name type="common">Peach</name>
    <name type="synonym">Amygdalus persica</name>
    <dbReference type="NCBI Taxonomy" id="3760"/>
    <lineage>
        <taxon>Eukaryota</taxon>
        <taxon>Viridiplantae</taxon>
        <taxon>Streptophyta</taxon>
        <taxon>Embryophyta</taxon>
        <taxon>Tracheophyta</taxon>
        <taxon>Spermatophyta</taxon>
        <taxon>Magnoliopsida</taxon>
        <taxon>eudicotyledons</taxon>
        <taxon>Gunneridae</taxon>
        <taxon>Pentapetalae</taxon>
        <taxon>rosids</taxon>
        <taxon>fabids</taxon>
        <taxon>Rosales</taxon>
        <taxon>Rosaceae</taxon>
        <taxon>Amygdaloideae</taxon>
        <taxon>Amygdaleae</taxon>
        <taxon>Prunus</taxon>
    </lineage>
</organism>
<protein>
    <recommendedName>
        <fullName>Pectinesterase/pectinesterase inhibitor PPE8B</fullName>
    </recommendedName>
    <domain>
        <recommendedName>
            <fullName>Pectinesterase inhibitor PPE8B</fullName>
        </recommendedName>
        <alternativeName>
            <fullName>Pectin methylesterase inhibitor PPE8B</fullName>
        </alternativeName>
    </domain>
    <domain>
        <recommendedName>
            <fullName>Pectinesterase PPE8B</fullName>
            <shortName>PE PPE8B</shortName>
            <ecNumber>3.1.1.11</ecNumber>
        </recommendedName>
        <alternativeName>
            <fullName>Pectin methylesterase PPE8B</fullName>
        </alternativeName>
    </domain>
</protein>
<sequence length="522" mass="57397">MPYLLMASHNPLPAGKQLLLLVLLCAFFSSSFIPFASCSITDDLQTQCLKVSATEFAGSLKDTIDAVQQVASILSQFANAFGDFRLANAISDCLDLLDFSADELNWSLSASQNQKGKNNSTGKLSSDLRTWLSAALVNQDTCSNGFEGTNSIVQGLISAGLGQVTSLVQELLTQVHPNSNQQGPNGQIPSWVKTKDRKLLQADGVSVDAIVAQDGTGNFTNVTDAVLAAPDYSMRRYVIYIKRGTYKENVEIKKKKWNLMMIGDGMDATIISGNRSFVDGWTTFRSATFAVSGRGFIARDITFENTAGPEKHQAVALRSDSDLSVFYRCNIRGYQDTLYTHTMRQFYRDCKISGTVDFIFGDATVVFQNCQILAKKGLPNQKNSITAQGRKDPNEPTGISIQFCNITADSDLEAASVNSTPTYLGRPWKLYSRTVIMQSFLSNVIRPEGWLEWNGDFALNSLFYGEYMNYGPGAGLGSRVKWPGYQVFNESTQAKNYTVAQFIEGNLWLPSTGVKYTAEFGV</sequence>
<feature type="signal peptide" evidence="2">
    <location>
        <begin position="1"/>
        <end position="30"/>
    </location>
</feature>
<feature type="chain" id="PRO_0000023497" description="Pectinesterase/pectinesterase inhibitor PPE8B">
    <location>
        <begin position="31"/>
        <end position="522"/>
    </location>
</feature>
<feature type="region of interest" description="Pectinesterase inhibitor PPE8B">
    <location>
        <begin position="31"/>
        <end position="174"/>
    </location>
</feature>
<feature type="region of interest" description="Pectinesterase PPE8B">
    <location>
        <begin position="208"/>
        <end position="506"/>
    </location>
</feature>
<feature type="active site" description="Proton donor; for pectinesterase activity" evidence="3">
    <location>
        <position position="336"/>
    </location>
</feature>
<feature type="active site" description="Nucleophile; for pectinesterase activity" evidence="3">
    <location>
        <position position="357"/>
    </location>
</feature>
<feature type="binding site" evidence="1">
    <location>
        <position position="283"/>
    </location>
    <ligand>
        <name>substrate</name>
        <note>for pectinesterase activity</note>
    </ligand>
</feature>
<feature type="binding site" evidence="1">
    <location>
        <position position="313"/>
    </location>
    <ligand>
        <name>substrate</name>
        <note>for pectinesterase activity</note>
    </ligand>
</feature>
<feature type="binding site" evidence="1">
    <location>
        <position position="426"/>
    </location>
    <ligand>
        <name>substrate</name>
        <note>for pectinesterase activity</note>
    </ligand>
</feature>
<feature type="binding site" evidence="1">
    <location>
        <position position="428"/>
    </location>
    <ligand>
        <name>substrate</name>
        <note>for pectinesterase activity</note>
    </ligand>
</feature>
<feature type="site" description="Transition state stabilizer" evidence="1">
    <location>
        <position position="335"/>
    </location>
</feature>
<feature type="glycosylation site" description="N-linked (GlcNAc...) asparagine" evidence="2">
    <location>
        <position position="105"/>
    </location>
</feature>
<feature type="glycosylation site" description="N-linked (GlcNAc...) asparagine" evidence="2">
    <location>
        <position position="118"/>
    </location>
</feature>
<feature type="glycosylation site" description="N-linked (GlcNAc...) asparagine" evidence="2">
    <location>
        <position position="119"/>
    </location>
</feature>
<feature type="glycosylation site" description="N-linked (GlcNAc...) asparagine" evidence="2">
    <location>
        <position position="218"/>
    </location>
</feature>
<feature type="glycosylation site" description="N-linked (GlcNAc...) asparagine" evidence="2">
    <location>
        <position position="221"/>
    </location>
</feature>
<feature type="glycosylation site" description="N-linked (GlcNAc...) asparagine" evidence="2">
    <location>
        <position position="274"/>
    </location>
</feature>
<feature type="glycosylation site" description="N-linked (GlcNAc...) asparagine" evidence="2">
    <location>
        <position position="405"/>
    </location>
</feature>
<feature type="glycosylation site" description="N-linked (GlcNAc...) asparagine" evidence="2">
    <location>
        <position position="489"/>
    </location>
</feature>
<feature type="glycosylation site" description="N-linked (GlcNAc...) asparagine" evidence="2">
    <location>
        <position position="496"/>
    </location>
</feature>
<feature type="disulfide bond" evidence="1">
    <location>
        <begin position="350"/>
        <end position="370"/>
    </location>
</feature>
<accession>Q43062</accession>
<name>PME_PRUPE</name>
<proteinExistence type="evidence at transcript level"/>